<protein>
    <recommendedName>
        <fullName>T-complex protein 1 subunit theta</fullName>
        <shortName>TCP-1-theta</shortName>
        <ecNumber evidence="1">3.6.1.-</ecNumber>
    </recommendedName>
    <alternativeName>
        <fullName>CCT-theta</fullName>
    </alternativeName>
</protein>
<comment type="function">
    <text evidence="1">Component of the chaperonin-containing T-complex (TRiC), a molecular chaperone complex that assists the folding of actin, tubulin and other proteins upon ATP hydrolysis. The TRiC complex mediates the folding of WRAP53/TCAB1, thereby regulating telomere maintenance. As part of the TRiC complex may play a role in the assembly of BBSome, a complex involved in ciliogenesis regulating transports vesicles to the cilia.</text>
</comment>
<comment type="catalytic activity">
    <reaction evidence="1">
        <text>ATP + H2O = ADP + phosphate + H(+)</text>
        <dbReference type="Rhea" id="RHEA:13065"/>
        <dbReference type="ChEBI" id="CHEBI:15377"/>
        <dbReference type="ChEBI" id="CHEBI:15378"/>
        <dbReference type="ChEBI" id="CHEBI:30616"/>
        <dbReference type="ChEBI" id="CHEBI:43474"/>
        <dbReference type="ChEBI" id="CHEBI:456216"/>
    </reaction>
</comment>
<comment type="subunit">
    <text evidence="1 4 5">Component of the chaperonin-containing T-complex (TRiC), a hexadecamer composed of two identical back-to-back stacked rings enclosing a protein folding chamber. Each ring is made up of eight different subunits: TCP1/CCT1, CCT2, CCT3, CCT4, CCT5, CCT6A/CCT6, CCT7, CCT8. Interacts with PACRG (By similarity). Interacts with DNAAF4 (PubMed:23872636). Interacts with synaptic plasticity regulator PANTS (PubMed:35771867).</text>
</comment>
<comment type="subcellular location">
    <subcellularLocation>
        <location evidence="1">Cytoplasm</location>
    </subcellularLocation>
    <subcellularLocation>
        <location evidence="1">Cytoplasm</location>
        <location evidence="1">Cytoskeleton</location>
        <location evidence="1">Microtubule organizing center</location>
        <location evidence="1">Centrosome</location>
    </subcellularLocation>
    <subcellularLocation>
        <location evidence="3">Cytoplasm</location>
        <location evidence="3">Cytoskeleton</location>
        <location evidence="3">Cilium basal body</location>
    </subcellularLocation>
</comment>
<comment type="similarity">
    <text evidence="6">Belongs to the TCP-1 chaperonin family.</text>
</comment>
<accession>P42932</accession>
<name>TCPQ_MOUSE</name>
<organism>
    <name type="scientific">Mus musculus</name>
    <name type="common">Mouse</name>
    <dbReference type="NCBI Taxonomy" id="10090"/>
    <lineage>
        <taxon>Eukaryota</taxon>
        <taxon>Metazoa</taxon>
        <taxon>Chordata</taxon>
        <taxon>Craniata</taxon>
        <taxon>Vertebrata</taxon>
        <taxon>Euteleostomi</taxon>
        <taxon>Mammalia</taxon>
        <taxon>Eutheria</taxon>
        <taxon>Euarchontoglires</taxon>
        <taxon>Glires</taxon>
        <taxon>Rodentia</taxon>
        <taxon>Myomorpha</taxon>
        <taxon>Muroidea</taxon>
        <taxon>Muridae</taxon>
        <taxon>Murinae</taxon>
        <taxon>Mus</taxon>
        <taxon>Mus</taxon>
    </lineage>
</organism>
<reference key="1">
    <citation type="journal article" date="1995" name="Gene">
        <title>The eighth Cct gene, Cctq, encoding the theta subunit of the cytosolic chaperonin containing TCP-1.</title>
        <authorList>
            <person name="Kubota H."/>
            <person name="Hynes G."/>
            <person name="Willison K."/>
        </authorList>
    </citation>
    <scope>NUCLEOTIDE SEQUENCE [MRNA]</scope>
</reference>
<reference key="2">
    <citation type="journal article" date="2004" name="Genome Res.">
        <title>The status, quality, and expansion of the NIH full-length cDNA project: the Mammalian Gene Collection (MGC).</title>
        <authorList>
            <consortium name="The MGC Project Team"/>
        </authorList>
    </citation>
    <scope>NUCLEOTIDE SEQUENCE [LARGE SCALE MRNA]</scope>
    <source>
        <strain>FVB/N</strain>
        <tissue>Mammary gland</tissue>
    </source>
</reference>
<reference key="3">
    <citation type="submission" date="2009-01" db="UniProtKB">
        <authorList>
            <person name="Lubec G."/>
            <person name="Kang S.U."/>
            <person name="Sunyer B."/>
            <person name="Chen W.-Q."/>
        </authorList>
    </citation>
    <scope>PROTEIN SEQUENCE OF 8-16; 63-74; 156-165; 172-181; 207-224; 261-296; 308-314; 368-400; 408-421; 441-450; 477-504 AND 510-520</scope>
    <scope>IDENTIFICATION BY MASS SPECTROMETRY</scope>
    <source>
        <strain>C57BL/6J</strain>
        <strain>OF1</strain>
        <tissue>Brain</tissue>
        <tissue>Hippocampus</tissue>
    </source>
</reference>
<reference key="4">
    <citation type="journal article" date="2010" name="Cell">
        <title>A tissue-specific atlas of mouse protein phosphorylation and expression.</title>
        <authorList>
            <person name="Huttlin E.L."/>
            <person name="Jedrychowski M.P."/>
            <person name="Elias J.E."/>
            <person name="Goswami T."/>
            <person name="Rad R."/>
            <person name="Beausoleil S.A."/>
            <person name="Villen J."/>
            <person name="Haas W."/>
            <person name="Sowa M.E."/>
            <person name="Gygi S.P."/>
        </authorList>
    </citation>
    <scope>PHOSPHORYLATION [LARGE SCALE ANALYSIS] AT SER-23</scope>
    <scope>IDENTIFICATION BY MASS SPECTROMETRY [LARGE SCALE ANALYSIS]</scope>
    <source>
        <tissue>Brain</tissue>
        <tissue>Brown adipose tissue</tissue>
        <tissue>Heart</tissue>
        <tissue>Kidney</tissue>
        <tissue>Liver</tissue>
        <tissue>Lung</tissue>
        <tissue>Pancreas</tissue>
        <tissue>Spleen</tissue>
        <tissue>Testis</tissue>
    </source>
</reference>
<reference key="5">
    <citation type="journal article" date="2013" name="Mol. Cell">
        <title>SIRT5-mediated lysine desuccinylation impacts diverse metabolic pathways.</title>
        <authorList>
            <person name="Park J."/>
            <person name="Chen Y."/>
            <person name="Tishkoff D.X."/>
            <person name="Peng C."/>
            <person name="Tan M."/>
            <person name="Dai L."/>
            <person name="Xie Z."/>
            <person name="Zhang Y."/>
            <person name="Zwaans B.M."/>
            <person name="Skinner M.E."/>
            <person name="Lombard D.B."/>
            <person name="Zhao Y."/>
        </authorList>
    </citation>
    <scope>ACETYLATION [LARGE SCALE ANALYSIS] AT LYS-400</scope>
    <scope>IDENTIFICATION BY MASS SPECTROMETRY [LARGE SCALE ANALYSIS]</scope>
    <source>
        <tissue>Embryonic fibroblast</tissue>
    </source>
</reference>
<reference key="6">
    <citation type="journal article" date="2013" name="Nat. Genet.">
        <title>DYX1C1 is required for axonemal dynein assembly and ciliary motility.</title>
        <authorList>
            <person name="Tarkar A."/>
            <person name="Loges N.T."/>
            <person name="Slagle C.E."/>
            <person name="Francis R."/>
            <person name="Dougherty G.W."/>
            <person name="Tamayo J.V."/>
            <person name="Shook B."/>
            <person name="Cantino M."/>
            <person name="Schwartz D."/>
            <person name="Jahnke C."/>
            <person name="Olbrich H."/>
            <person name="Werner C."/>
            <person name="Raidt J."/>
            <person name="Pennekamp P."/>
            <person name="Abouhamed M."/>
            <person name="Hjeij R."/>
            <person name="Kohler G."/>
            <person name="Griese M."/>
            <person name="Li Y."/>
            <person name="Lemke K."/>
            <person name="Klena N."/>
            <person name="Liu X."/>
            <person name="Gabriel G."/>
            <person name="Tobita K."/>
            <person name="Jaspers M."/>
            <person name="Morgan L.C."/>
            <person name="Shapiro A.J."/>
            <person name="Letteboer S.J."/>
            <person name="Mans D.A."/>
            <person name="Carson J.L."/>
            <person name="Leigh M.W."/>
            <person name="Wolf W.E."/>
            <person name="Chen S."/>
            <person name="Lucas J.S."/>
            <person name="Onoufriadis A."/>
            <person name="Plagnol V."/>
            <person name="Schmidts M."/>
            <person name="Boldt K."/>
            <person name="Roepman R."/>
            <person name="Zariwala M.A."/>
            <person name="Lo C.W."/>
            <person name="Mitchison H.M."/>
            <person name="Knowles M.R."/>
            <person name="Burdine R.D."/>
            <person name="Loturco J.J."/>
            <person name="Omran H."/>
        </authorList>
    </citation>
    <scope>INTERACTION WITH DNAAF4</scope>
</reference>
<reference key="7">
    <citation type="journal article" date="2014" name="Cell. Mol. Life Sci.">
        <title>The nucleotide-binding proteins Nubp1 and Nubp2 are negative regulators of ciliogenesis.</title>
        <authorList>
            <person name="Kypri E."/>
            <person name="Christodoulou A."/>
            <person name="Maimaris G."/>
            <person name="Lethan M."/>
            <person name="Markaki M."/>
            <person name="Lysandrou C."/>
            <person name="Lederer C.W."/>
            <person name="Tavernarakis N."/>
            <person name="Geimer S."/>
            <person name="Pedersen L.B."/>
            <person name="Santama N."/>
        </authorList>
    </citation>
    <scope>SUBCELLULAR LOCATION</scope>
</reference>
<reference key="8">
    <citation type="journal article" date="2022" name="PLoS ONE">
        <title>An Rtn4/Nogo-A-interacting micropeptide modulates synaptic plasticity with age.</title>
        <authorList>
            <person name="Kragness S."/>
            <person name="Clark Z."/>
            <person name="Mullin A."/>
            <person name="Guidry J."/>
            <person name="Earls L.R."/>
        </authorList>
    </citation>
    <scope>INTERACTION WITH PANTS</scope>
</reference>
<feature type="initiator methionine" description="Removed" evidence="1">
    <location>
        <position position="1"/>
    </location>
</feature>
<feature type="chain" id="PRO_0000128374" description="T-complex protein 1 subunit theta">
    <location>
        <begin position="2"/>
        <end position="548"/>
    </location>
</feature>
<feature type="region of interest" description="Disordered" evidence="2">
    <location>
        <begin position="529"/>
        <end position="548"/>
    </location>
</feature>
<feature type="binding site" evidence="1">
    <location>
        <position position="47"/>
    </location>
    <ligand>
        <name>ADP</name>
        <dbReference type="ChEBI" id="CHEBI:456216"/>
    </ligand>
</feature>
<feature type="binding site" evidence="1">
    <location>
        <position position="48"/>
    </location>
    <ligand>
        <name>ADP</name>
        <dbReference type="ChEBI" id="CHEBI:456216"/>
    </ligand>
</feature>
<feature type="binding site" evidence="1">
    <location>
        <position position="99"/>
    </location>
    <ligand>
        <name>Mg(2+)</name>
        <dbReference type="ChEBI" id="CHEBI:18420"/>
    </ligand>
</feature>
<feature type="binding site" evidence="1">
    <location>
        <position position="100"/>
    </location>
    <ligand>
        <name>ADP</name>
        <dbReference type="ChEBI" id="CHEBI:456216"/>
    </ligand>
</feature>
<feature type="binding site" evidence="1">
    <location>
        <position position="100"/>
    </location>
    <ligand>
        <name>ATP</name>
        <dbReference type="ChEBI" id="CHEBI:30616"/>
    </ligand>
</feature>
<feature type="binding site" evidence="1">
    <location>
        <position position="101"/>
    </location>
    <ligand>
        <name>ADP</name>
        <dbReference type="ChEBI" id="CHEBI:456216"/>
    </ligand>
</feature>
<feature type="binding site" evidence="1">
    <location>
        <position position="101"/>
    </location>
    <ligand>
        <name>ATP</name>
        <dbReference type="ChEBI" id="CHEBI:30616"/>
    </ligand>
</feature>
<feature type="binding site" evidence="1">
    <location>
        <position position="102"/>
    </location>
    <ligand>
        <name>ADP</name>
        <dbReference type="ChEBI" id="CHEBI:456216"/>
    </ligand>
</feature>
<feature type="binding site" evidence="1">
    <location>
        <position position="102"/>
    </location>
    <ligand>
        <name>ATP</name>
        <dbReference type="ChEBI" id="CHEBI:30616"/>
    </ligand>
</feature>
<feature type="binding site" evidence="1">
    <location>
        <position position="103"/>
    </location>
    <ligand>
        <name>ADP</name>
        <dbReference type="ChEBI" id="CHEBI:456216"/>
    </ligand>
</feature>
<feature type="binding site" evidence="1">
    <location>
        <position position="169"/>
    </location>
    <ligand>
        <name>ADP</name>
        <dbReference type="ChEBI" id="CHEBI:456216"/>
    </ligand>
</feature>
<feature type="binding site" evidence="1">
    <location>
        <position position="170"/>
    </location>
    <ligand>
        <name>ADP</name>
        <dbReference type="ChEBI" id="CHEBI:456216"/>
    </ligand>
</feature>
<feature type="binding site" evidence="1">
    <location>
        <position position="170"/>
    </location>
    <ligand>
        <name>ATP</name>
        <dbReference type="ChEBI" id="CHEBI:30616"/>
    </ligand>
</feature>
<feature type="binding site" evidence="1">
    <location>
        <position position="171"/>
    </location>
    <ligand>
        <name>ADP</name>
        <dbReference type="ChEBI" id="CHEBI:456216"/>
    </ligand>
</feature>
<feature type="binding site" evidence="1">
    <location>
        <position position="171"/>
    </location>
    <ligand>
        <name>ATP</name>
        <dbReference type="ChEBI" id="CHEBI:30616"/>
    </ligand>
</feature>
<feature type="binding site" evidence="1">
    <location>
        <position position="412"/>
    </location>
    <ligand>
        <name>ADP</name>
        <dbReference type="ChEBI" id="CHEBI:456216"/>
    </ligand>
</feature>
<feature type="binding site" evidence="1">
    <location>
        <position position="412"/>
    </location>
    <ligand>
        <name>ATP</name>
        <dbReference type="ChEBI" id="CHEBI:30616"/>
    </ligand>
</feature>
<feature type="binding site" evidence="1">
    <location>
        <position position="499"/>
    </location>
    <ligand>
        <name>ADP</name>
        <dbReference type="ChEBI" id="CHEBI:456216"/>
    </ligand>
</feature>
<feature type="binding site" evidence="1">
    <location>
        <position position="499"/>
    </location>
    <ligand>
        <name>ATP</name>
        <dbReference type="ChEBI" id="CHEBI:30616"/>
    </ligand>
</feature>
<feature type="binding site" evidence="1">
    <location>
        <position position="504"/>
    </location>
    <ligand>
        <name>ATP</name>
        <dbReference type="ChEBI" id="CHEBI:30616"/>
    </ligand>
</feature>
<feature type="modified residue" description="N-acetylalanine" evidence="1">
    <location>
        <position position="2"/>
    </location>
</feature>
<feature type="modified residue" description="Phosphoserine" evidence="7">
    <location>
        <position position="23"/>
    </location>
</feature>
<feature type="modified residue" description="Phosphotyrosine" evidence="1">
    <location>
        <position position="30"/>
    </location>
</feature>
<feature type="modified residue" description="Phosphoserine" evidence="1">
    <location>
        <position position="162"/>
    </location>
</feature>
<feature type="modified residue" description="Phosphoserine" evidence="1">
    <location>
        <position position="269"/>
    </location>
</feature>
<feature type="modified residue" description="Phosphoserine" evidence="1">
    <location>
        <position position="317"/>
    </location>
</feature>
<feature type="modified residue" description="N6-acetyllysine" evidence="1">
    <location>
        <position position="318"/>
    </location>
</feature>
<feature type="modified residue" description="N6-acetyllysine" evidence="8">
    <location>
        <position position="400"/>
    </location>
</feature>
<feature type="modified residue" description="N6-acetyllysine" evidence="1">
    <location>
        <position position="466"/>
    </location>
</feature>
<feature type="modified residue" description="Phosphotyrosine" evidence="1">
    <location>
        <position position="505"/>
    </location>
</feature>
<feature type="modified residue" description="Phosphoserine" evidence="1">
    <location>
        <position position="537"/>
    </location>
</feature>
<feature type="cross-link" description="Glycyl lysine isopeptide (Lys-Gly) (interchain with G-Cter in SUMO2)" evidence="1">
    <location>
        <position position="224"/>
    </location>
</feature>
<feature type="cross-link" description="Glycyl lysine isopeptide (Lys-Gly) (interchain with G-Cter in SUMO2)" evidence="1">
    <location>
        <position position="254"/>
    </location>
</feature>
<feature type="cross-link" description="Glycyl lysine isopeptide (Lys-Gly) (interchain with G-Cter in SUMO2)" evidence="1">
    <location>
        <position position="260"/>
    </location>
</feature>
<feature type="cross-link" description="Glycyl lysine isopeptide (Lys-Gly) (interchain with G-Cter in SUMO1)" evidence="1">
    <location>
        <position position="459"/>
    </location>
</feature>
<feature type="cross-link" description="Glycyl lysine isopeptide (Lys-Gly) (interchain with G-Cter in SUMO2)" evidence="1">
    <location>
        <position position="534"/>
    </location>
</feature>
<feature type="cross-link" description="Glycyl lysine isopeptide (Lys-Gly) (interchain with G-Cter in SUMO2)" evidence="1">
    <location>
        <position position="539"/>
    </location>
</feature>
<proteinExistence type="evidence at protein level"/>
<sequence length="548" mass="59555">MALHVPKAPGFAQMLKDGAKHFSGLEEAVYRNIQACKELAQTTRTAYGPNGMNKMVINRLEKLFVTNDAATILRELEVQHPAAKMIVMASHMQEQEVGDGTNFVLVFAGALLELAEELLRIGLSVSEVISGYEIACKKAHEILPELVCCSAKNLRDVDEVSSLLRTSIMSKQYGSETFLAKLIAQACVSIFPDSGNFNVDNIRVCKILGSGIYSSSVLHGMVFKKETEGDVTSVKDAKIAVYSCPFDGMITETKGTVLIKTAEELMNFSKGEENLMDAQVKAIAGTGANVIVTGGKVADIALHYANKYNIMLVRLNSKWDLRRLCKTVGATALPKLTPPVQEEMGHCDSVYLSEVGDTQVVVFKHEKEDGAISTIVLRGSTDNLMDDIERAVDDGVNTFKVLTRDKRLVPGGGATEIELAKQITSYGETCPGLEQYAIKKFAEAFEAIPRALAENSGVKANEVISKLYSVHQEGNKNVGLDIEAEVPAVKDMLEASILDTYLGKYWAIKLATNAAVTVLRVDQIIMAKPAGGPKPPSGKKDWDDDQND</sequence>
<gene>
    <name type="primary">Cct8</name>
    <name type="synonym">Cctq</name>
</gene>
<dbReference type="EC" id="3.6.1.-" evidence="1"/>
<dbReference type="EMBL" id="Z37164">
    <property type="protein sequence ID" value="CAA85521.1"/>
    <property type="molecule type" value="mRNA"/>
</dbReference>
<dbReference type="EMBL" id="BC009007">
    <property type="protein sequence ID" value="AAH09007.1"/>
    <property type="molecule type" value="mRNA"/>
</dbReference>
<dbReference type="CCDS" id="CCDS37384.1"/>
<dbReference type="PIR" id="JC4073">
    <property type="entry name" value="JC4073"/>
</dbReference>
<dbReference type="RefSeq" id="NP_033970.3">
    <property type="nucleotide sequence ID" value="NM_009840.3"/>
</dbReference>
<dbReference type="SMR" id="P42932"/>
<dbReference type="BioGRID" id="198572">
    <property type="interactions" value="81"/>
</dbReference>
<dbReference type="CORUM" id="P42932"/>
<dbReference type="FunCoup" id="P42932">
    <property type="interactions" value="3590"/>
</dbReference>
<dbReference type="IntAct" id="P42932">
    <property type="interactions" value="48"/>
</dbReference>
<dbReference type="MINT" id="P42932"/>
<dbReference type="STRING" id="10090.ENSMUSP00000026704"/>
<dbReference type="GlyGen" id="P42932">
    <property type="glycosylation" value="2 sites, 1 N-linked glycan (1 site), 1 O-linked glycan (1 site)"/>
</dbReference>
<dbReference type="iPTMnet" id="P42932"/>
<dbReference type="MetOSite" id="P42932"/>
<dbReference type="PhosphoSitePlus" id="P42932"/>
<dbReference type="SwissPalm" id="P42932"/>
<dbReference type="REPRODUCTION-2DPAGE" id="P42932"/>
<dbReference type="jPOST" id="P42932"/>
<dbReference type="PaxDb" id="10090-ENSMUSP00000026704"/>
<dbReference type="PeptideAtlas" id="P42932"/>
<dbReference type="ProteomicsDB" id="263094"/>
<dbReference type="Pumba" id="P42932"/>
<dbReference type="Antibodypedia" id="6409">
    <property type="antibodies" value="298 antibodies from 32 providers"/>
</dbReference>
<dbReference type="DNASU" id="12469"/>
<dbReference type="Ensembl" id="ENSMUST00000026704.14">
    <property type="protein sequence ID" value="ENSMUSP00000026704.8"/>
    <property type="gene ID" value="ENSMUSG00000025613.14"/>
</dbReference>
<dbReference type="GeneID" id="12469"/>
<dbReference type="KEGG" id="mmu:12469"/>
<dbReference type="UCSC" id="uc007zul.1">
    <property type="organism name" value="mouse"/>
</dbReference>
<dbReference type="AGR" id="MGI:107183"/>
<dbReference type="CTD" id="10694"/>
<dbReference type="MGI" id="MGI:107183">
    <property type="gene designation" value="Cct8"/>
</dbReference>
<dbReference type="VEuPathDB" id="HostDB:ENSMUSG00000025613"/>
<dbReference type="eggNOG" id="KOG0362">
    <property type="taxonomic scope" value="Eukaryota"/>
</dbReference>
<dbReference type="GeneTree" id="ENSGT00550000074783"/>
<dbReference type="InParanoid" id="P42932"/>
<dbReference type="OMA" id="WGLKYAV"/>
<dbReference type="OrthoDB" id="1748577at2759"/>
<dbReference type="PhylomeDB" id="P42932"/>
<dbReference type="TreeFam" id="TF105699"/>
<dbReference type="BRENDA" id="3.6.4.B10">
    <property type="organism ID" value="3474"/>
</dbReference>
<dbReference type="Reactome" id="R-MMU-390471">
    <property type="pathway name" value="Association of TriC/CCT with target proteins during biosynthesis"/>
</dbReference>
<dbReference type="Reactome" id="R-MMU-6798695">
    <property type="pathway name" value="Neutrophil degranulation"/>
</dbReference>
<dbReference type="Reactome" id="R-MMU-6814122">
    <property type="pathway name" value="Cooperation of PDCL (PhLP1) and TRiC/CCT in G-protein beta folding"/>
</dbReference>
<dbReference type="BioGRID-ORCS" id="12469">
    <property type="hits" value="29 hits in 76 CRISPR screens"/>
</dbReference>
<dbReference type="CD-CODE" id="CE726F99">
    <property type="entry name" value="Postsynaptic density"/>
</dbReference>
<dbReference type="ChiTaRS" id="Cct8">
    <property type="organism name" value="mouse"/>
</dbReference>
<dbReference type="PRO" id="PR:P42932"/>
<dbReference type="Proteomes" id="UP000000589">
    <property type="component" value="Chromosome 16"/>
</dbReference>
<dbReference type="RNAct" id="P42932">
    <property type="molecule type" value="protein"/>
</dbReference>
<dbReference type="Bgee" id="ENSMUSG00000025613">
    <property type="expression patterns" value="Expressed in otic placode and 279 other cell types or tissues"/>
</dbReference>
<dbReference type="ExpressionAtlas" id="P42932">
    <property type="expression patterns" value="baseline and differential"/>
</dbReference>
<dbReference type="GO" id="GO:0044297">
    <property type="term" value="C:cell body"/>
    <property type="evidence" value="ECO:0000314"/>
    <property type="project" value="MGI"/>
</dbReference>
<dbReference type="GO" id="GO:0005813">
    <property type="term" value="C:centrosome"/>
    <property type="evidence" value="ECO:0000266"/>
    <property type="project" value="MGI"/>
</dbReference>
<dbReference type="GO" id="GO:0005832">
    <property type="term" value="C:chaperonin-containing T-complex"/>
    <property type="evidence" value="ECO:0000314"/>
    <property type="project" value="MGI"/>
</dbReference>
<dbReference type="GO" id="GO:0005929">
    <property type="term" value="C:cilium"/>
    <property type="evidence" value="ECO:0007669"/>
    <property type="project" value="UniProtKB-KW"/>
</dbReference>
<dbReference type="GO" id="GO:0005874">
    <property type="term" value="C:microtubule"/>
    <property type="evidence" value="ECO:0007669"/>
    <property type="project" value="Ensembl"/>
</dbReference>
<dbReference type="GO" id="GO:0002199">
    <property type="term" value="C:zona pellucida receptor complex"/>
    <property type="evidence" value="ECO:0000314"/>
    <property type="project" value="MGI"/>
</dbReference>
<dbReference type="GO" id="GO:0005524">
    <property type="term" value="F:ATP binding"/>
    <property type="evidence" value="ECO:0007669"/>
    <property type="project" value="UniProtKB-KW"/>
</dbReference>
<dbReference type="GO" id="GO:0016887">
    <property type="term" value="F:ATP hydrolysis activity"/>
    <property type="evidence" value="ECO:0007669"/>
    <property type="project" value="InterPro"/>
</dbReference>
<dbReference type="GO" id="GO:0140662">
    <property type="term" value="F:ATP-dependent protein folding chaperone"/>
    <property type="evidence" value="ECO:0007669"/>
    <property type="project" value="InterPro"/>
</dbReference>
<dbReference type="GO" id="GO:0051082">
    <property type="term" value="F:unfolded protein binding"/>
    <property type="evidence" value="ECO:0007669"/>
    <property type="project" value="InterPro"/>
</dbReference>
<dbReference type="GO" id="GO:0007339">
    <property type="term" value="P:binding of sperm to zona pellucida"/>
    <property type="evidence" value="ECO:0000314"/>
    <property type="project" value="MGI"/>
</dbReference>
<dbReference type="GO" id="GO:0051086">
    <property type="term" value="P:chaperone mediated protein folding independent of cofactor"/>
    <property type="evidence" value="ECO:0007669"/>
    <property type="project" value="Ensembl"/>
</dbReference>
<dbReference type="GO" id="GO:0032212">
    <property type="term" value="P:positive regulation of telomere maintenance via telomerase"/>
    <property type="evidence" value="ECO:0007669"/>
    <property type="project" value="Ensembl"/>
</dbReference>
<dbReference type="GO" id="GO:0050821">
    <property type="term" value="P:protein stabilization"/>
    <property type="evidence" value="ECO:0007669"/>
    <property type="project" value="Ensembl"/>
</dbReference>
<dbReference type="CDD" id="cd03341">
    <property type="entry name" value="TCP1_theta"/>
    <property type="match status" value="1"/>
</dbReference>
<dbReference type="FunFam" id="3.50.7.10:FF:000008">
    <property type="entry name" value="T-complex protein 1 subunit theta"/>
    <property type="match status" value="1"/>
</dbReference>
<dbReference type="Gene3D" id="3.50.7.10">
    <property type="entry name" value="GroEL"/>
    <property type="match status" value="1"/>
</dbReference>
<dbReference type="Gene3D" id="1.10.560.10">
    <property type="entry name" value="GroEL-like equatorial domain"/>
    <property type="match status" value="1"/>
</dbReference>
<dbReference type="Gene3D" id="3.30.260.10">
    <property type="entry name" value="TCP-1-like chaperonin intermediate domain"/>
    <property type="match status" value="1"/>
</dbReference>
<dbReference type="InterPro" id="IPR012721">
    <property type="entry name" value="Chap_CCT_theta"/>
</dbReference>
<dbReference type="InterPro" id="IPR017998">
    <property type="entry name" value="Chaperone_TCP-1"/>
</dbReference>
<dbReference type="InterPro" id="IPR002194">
    <property type="entry name" value="Chaperonin_TCP-1_CS"/>
</dbReference>
<dbReference type="InterPro" id="IPR002423">
    <property type="entry name" value="Cpn60/GroEL/TCP-1"/>
</dbReference>
<dbReference type="InterPro" id="IPR027409">
    <property type="entry name" value="GroEL-like_apical_dom_sf"/>
</dbReference>
<dbReference type="InterPro" id="IPR027413">
    <property type="entry name" value="GROEL-like_equatorial_sf"/>
</dbReference>
<dbReference type="InterPro" id="IPR027410">
    <property type="entry name" value="TCP-1-like_intermed_sf"/>
</dbReference>
<dbReference type="NCBIfam" id="TIGR02346">
    <property type="entry name" value="chap_CCT_theta"/>
    <property type="match status" value="1"/>
</dbReference>
<dbReference type="PANTHER" id="PTHR11353">
    <property type="entry name" value="CHAPERONIN"/>
    <property type="match status" value="1"/>
</dbReference>
<dbReference type="Pfam" id="PF00118">
    <property type="entry name" value="Cpn60_TCP1"/>
    <property type="match status" value="1"/>
</dbReference>
<dbReference type="PRINTS" id="PR00304">
    <property type="entry name" value="TCOMPLEXTCP1"/>
</dbReference>
<dbReference type="SUPFAM" id="SSF52029">
    <property type="entry name" value="GroEL apical domain-like"/>
    <property type="match status" value="1"/>
</dbReference>
<dbReference type="SUPFAM" id="SSF48592">
    <property type="entry name" value="GroEL equatorial domain-like"/>
    <property type="match status" value="1"/>
</dbReference>
<dbReference type="SUPFAM" id="SSF54849">
    <property type="entry name" value="GroEL-intermediate domain like"/>
    <property type="match status" value="1"/>
</dbReference>
<dbReference type="PROSITE" id="PS00750">
    <property type="entry name" value="TCP1_1"/>
    <property type="match status" value="1"/>
</dbReference>
<dbReference type="PROSITE" id="PS00751">
    <property type="entry name" value="TCP1_2"/>
    <property type="match status" value="1"/>
</dbReference>
<dbReference type="PROSITE" id="PS00995">
    <property type="entry name" value="TCP1_3"/>
    <property type="match status" value="1"/>
</dbReference>
<evidence type="ECO:0000250" key="1">
    <source>
        <dbReference type="UniProtKB" id="P50990"/>
    </source>
</evidence>
<evidence type="ECO:0000256" key="2">
    <source>
        <dbReference type="SAM" id="MobiDB-lite"/>
    </source>
</evidence>
<evidence type="ECO:0000269" key="3">
    <source>
    </source>
</evidence>
<evidence type="ECO:0000269" key="4">
    <source>
    </source>
</evidence>
<evidence type="ECO:0000269" key="5">
    <source>
    </source>
</evidence>
<evidence type="ECO:0000305" key="6"/>
<evidence type="ECO:0007744" key="7">
    <source>
    </source>
</evidence>
<evidence type="ECO:0007744" key="8">
    <source>
    </source>
</evidence>
<keyword id="KW-0007">Acetylation</keyword>
<keyword id="KW-0067">ATP-binding</keyword>
<keyword id="KW-0966">Cell projection</keyword>
<keyword id="KW-0143">Chaperone</keyword>
<keyword id="KW-0969">Cilium</keyword>
<keyword id="KW-0963">Cytoplasm</keyword>
<keyword id="KW-0206">Cytoskeleton</keyword>
<keyword id="KW-0903">Direct protein sequencing</keyword>
<keyword id="KW-0378">Hydrolase</keyword>
<keyword id="KW-1017">Isopeptide bond</keyword>
<keyword id="KW-0460">Magnesium</keyword>
<keyword id="KW-0479">Metal-binding</keyword>
<keyword id="KW-0547">Nucleotide-binding</keyword>
<keyword id="KW-0597">Phosphoprotein</keyword>
<keyword id="KW-1185">Reference proteome</keyword>
<keyword id="KW-0832">Ubl conjugation</keyword>